<sequence>MKHSLTIIGAGLAGCEAAWQAARRGVSVTLHEMKPEKRSPAHHLPGLAELVCSNSLRGDSLENAVGLLKEELRRGGSLIMEAAEATRVPAGGALAVDRQLFSDYVTAKITAHPLINLVHGEMDAIPAEGTVIIASGPLTSDALAASLSGLTGDRLYFYDSIAPIVTADSLDREKVFAASRYGKGDGDDYLNCPLDREQYQAFVEQLNRGEKVAAREFEKLVHFEGCMPVEELAGRGEDTLRFGPMKPVGLTDPRTGIEPHAVIQLRAENREKTMYNLVGFQTKLTWPEQRRIFRTIPGLERAEFVRLGSMHRNTFINAPALLQPTQQLRSDPRIFFAGQITGVEGYVESAGSGFLAGITAARLLTGMPDPAVPPAETALGALVSHITNADVRHFQPMNVNYGLFPDLEGRIKKKERRGKLAERALASLSGWLERVSPPSRETGEPTGAEQVDLA</sequence>
<protein>
    <recommendedName>
        <fullName evidence="1">Methylenetetrahydrofolate--tRNA-(uracil-5-)-methyltransferase TrmFO</fullName>
        <ecNumber evidence="1">2.1.1.74</ecNumber>
    </recommendedName>
    <alternativeName>
        <fullName evidence="1">Folate-dependent tRNA (uracil-5-)-methyltransferase</fullName>
    </alternativeName>
    <alternativeName>
        <fullName evidence="1">Folate-dependent tRNA(M-5-U54)-methyltransferase</fullName>
    </alternativeName>
</protein>
<proteinExistence type="inferred from homology"/>
<accession>A1ALD8</accession>
<name>TRMFO_PELPD</name>
<reference key="1">
    <citation type="submission" date="2006-10" db="EMBL/GenBank/DDBJ databases">
        <title>Complete sequence of chromosome of Pelobacter propionicus DSM 2379.</title>
        <authorList>
            <consortium name="US DOE Joint Genome Institute"/>
            <person name="Copeland A."/>
            <person name="Lucas S."/>
            <person name="Lapidus A."/>
            <person name="Barry K."/>
            <person name="Detter J.C."/>
            <person name="Glavina del Rio T."/>
            <person name="Hammon N."/>
            <person name="Israni S."/>
            <person name="Dalin E."/>
            <person name="Tice H."/>
            <person name="Pitluck S."/>
            <person name="Saunders E."/>
            <person name="Brettin T."/>
            <person name="Bruce D."/>
            <person name="Han C."/>
            <person name="Tapia R."/>
            <person name="Schmutz J."/>
            <person name="Larimer F."/>
            <person name="Land M."/>
            <person name="Hauser L."/>
            <person name="Kyrpides N."/>
            <person name="Kim E."/>
            <person name="Lovley D."/>
            <person name="Richardson P."/>
        </authorList>
    </citation>
    <scope>NUCLEOTIDE SEQUENCE [LARGE SCALE GENOMIC DNA]</scope>
    <source>
        <strain>DSM 2379 / NBRC 103807 / OttBd1</strain>
    </source>
</reference>
<feature type="chain" id="PRO_0000346372" description="Methylenetetrahydrofolate--tRNA-(uracil-5-)-methyltransferase TrmFO">
    <location>
        <begin position="1"/>
        <end position="454"/>
    </location>
</feature>
<feature type="region of interest" description="Disordered" evidence="2">
    <location>
        <begin position="432"/>
        <end position="454"/>
    </location>
</feature>
<feature type="binding site" evidence="1">
    <location>
        <begin position="9"/>
        <end position="14"/>
    </location>
    <ligand>
        <name>FAD</name>
        <dbReference type="ChEBI" id="CHEBI:57692"/>
    </ligand>
</feature>
<organism>
    <name type="scientific">Pelobacter propionicus (strain DSM 2379 / NBRC 103807 / OttBd1)</name>
    <dbReference type="NCBI Taxonomy" id="338966"/>
    <lineage>
        <taxon>Bacteria</taxon>
        <taxon>Pseudomonadati</taxon>
        <taxon>Thermodesulfobacteriota</taxon>
        <taxon>Desulfuromonadia</taxon>
        <taxon>Desulfuromonadales</taxon>
        <taxon>Desulfuromonadaceae</taxon>
        <taxon>Pelobacter</taxon>
    </lineage>
</organism>
<comment type="function">
    <text evidence="1">Catalyzes the folate-dependent formation of 5-methyl-uridine at position 54 (M-5-U54) in all tRNAs.</text>
</comment>
<comment type="catalytic activity">
    <reaction evidence="1">
        <text>uridine(54) in tRNA + (6R)-5,10-methylene-5,6,7,8-tetrahydrofolate + NADH + H(+) = 5-methyluridine(54) in tRNA + (6S)-5,6,7,8-tetrahydrofolate + NAD(+)</text>
        <dbReference type="Rhea" id="RHEA:16873"/>
        <dbReference type="Rhea" id="RHEA-COMP:10167"/>
        <dbReference type="Rhea" id="RHEA-COMP:10193"/>
        <dbReference type="ChEBI" id="CHEBI:15378"/>
        <dbReference type="ChEBI" id="CHEBI:15636"/>
        <dbReference type="ChEBI" id="CHEBI:57453"/>
        <dbReference type="ChEBI" id="CHEBI:57540"/>
        <dbReference type="ChEBI" id="CHEBI:57945"/>
        <dbReference type="ChEBI" id="CHEBI:65315"/>
        <dbReference type="ChEBI" id="CHEBI:74447"/>
        <dbReference type="EC" id="2.1.1.74"/>
    </reaction>
</comment>
<comment type="catalytic activity">
    <reaction evidence="1">
        <text>uridine(54) in tRNA + (6R)-5,10-methylene-5,6,7,8-tetrahydrofolate + NADPH + H(+) = 5-methyluridine(54) in tRNA + (6S)-5,6,7,8-tetrahydrofolate + NADP(+)</text>
        <dbReference type="Rhea" id="RHEA:62372"/>
        <dbReference type="Rhea" id="RHEA-COMP:10167"/>
        <dbReference type="Rhea" id="RHEA-COMP:10193"/>
        <dbReference type="ChEBI" id="CHEBI:15378"/>
        <dbReference type="ChEBI" id="CHEBI:15636"/>
        <dbReference type="ChEBI" id="CHEBI:57453"/>
        <dbReference type="ChEBI" id="CHEBI:57783"/>
        <dbReference type="ChEBI" id="CHEBI:58349"/>
        <dbReference type="ChEBI" id="CHEBI:65315"/>
        <dbReference type="ChEBI" id="CHEBI:74447"/>
        <dbReference type="EC" id="2.1.1.74"/>
    </reaction>
</comment>
<comment type="cofactor">
    <cofactor evidence="1">
        <name>FAD</name>
        <dbReference type="ChEBI" id="CHEBI:57692"/>
    </cofactor>
</comment>
<comment type="subcellular location">
    <subcellularLocation>
        <location evidence="1">Cytoplasm</location>
    </subcellularLocation>
</comment>
<comment type="similarity">
    <text evidence="1">Belongs to the MnmG family. TrmFO subfamily.</text>
</comment>
<keyword id="KW-0963">Cytoplasm</keyword>
<keyword id="KW-0274">FAD</keyword>
<keyword id="KW-0285">Flavoprotein</keyword>
<keyword id="KW-0489">Methyltransferase</keyword>
<keyword id="KW-0520">NAD</keyword>
<keyword id="KW-0521">NADP</keyword>
<keyword id="KW-1185">Reference proteome</keyword>
<keyword id="KW-0808">Transferase</keyword>
<keyword id="KW-0819">tRNA processing</keyword>
<dbReference type="EC" id="2.1.1.74" evidence="1"/>
<dbReference type="EMBL" id="CP000482">
    <property type="protein sequence ID" value="ABK98158.1"/>
    <property type="molecule type" value="Genomic_DNA"/>
</dbReference>
<dbReference type="RefSeq" id="WP_011734471.1">
    <property type="nucleotide sequence ID" value="NC_008609.1"/>
</dbReference>
<dbReference type="SMR" id="A1ALD8"/>
<dbReference type="STRING" id="338966.Ppro_0527"/>
<dbReference type="KEGG" id="ppd:Ppro_0527"/>
<dbReference type="eggNOG" id="COG1206">
    <property type="taxonomic scope" value="Bacteria"/>
</dbReference>
<dbReference type="HOGENOM" id="CLU_033057_1_0_7"/>
<dbReference type="OrthoDB" id="9803114at2"/>
<dbReference type="Proteomes" id="UP000006732">
    <property type="component" value="Chromosome"/>
</dbReference>
<dbReference type="GO" id="GO:0005829">
    <property type="term" value="C:cytosol"/>
    <property type="evidence" value="ECO:0007669"/>
    <property type="project" value="TreeGrafter"/>
</dbReference>
<dbReference type="GO" id="GO:0050660">
    <property type="term" value="F:flavin adenine dinucleotide binding"/>
    <property type="evidence" value="ECO:0007669"/>
    <property type="project" value="UniProtKB-UniRule"/>
</dbReference>
<dbReference type="GO" id="GO:0047151">
    <property type="term" value="F:tRNA (uracil(54)-C5)-methyltransferase activity, 5,10-methylenetetrahydrofolate-dependent"/>
    <property type="evidence" value="ECO:0007669"/>
    <property type="project" value="UniProtKB-UniRule"/>
</dbReference>
<dbReference type="GO" id="GO:0030488">
    <property type="term" value="P:tRNA methylation"/>
    <property type="evidence" value="ECO:0007669"/>
    <property type="project" value="TreeGrafter"/>
</dbReference>
<dbReference type="GO" id="GO:0002098">
    <property type="term" value="P:tRNA wobble uridine modification"/>
    <property type="evidence" value="ECO:0007669"/>
    <property type="project" value="TreeGrafter"/>
</dbReference>
<dbReference type="Gene3D" id="3.50.50.60">
    <property type="entry name" value="FAD/NAD(P)-binding domain"/>
    <property type="match status" value="2"/>
</dbReference>
<dbReference type="HAMAP" id="MF_01037">
    <property type="entry name" value="TrmFO"/>
    <property type="match status" value="1"/>
</dbReference>
<dbReference type="InterPro" id="IPR036188">
    <property type="entry name" value="FAD/NAD-bd_sf"/>
</dbReference>
<dbReference type="InterPro" id="IPR002218">
    <property type="entry name" value="MnmG-rel"/>
</dbReference>
<dbReference type="InterPro" id="IPR040131">
    <property type="entry name" value="MnmG_N"/>
</dbReference>
<dbReference type="InterPro" id="IPR004417">
    <property type="entry name" value="TrmFO"/>
</dbReference>
<dbReference type="NCBIfam" id="TIGR00137">
    <property type="entry name" value="gid_trmFO"/>
    <property type="match status" value="1"/>
</dbReference>
<dbReference type="NCBIfam" id="NF003739">
    <property type="entry name" value="PRK05335.1"/>
    <property type="match status" value="1"/>
</dbReference>
<dbReference type="PANTHER" id="PTHR11806">
    <property type="entry name" value="GLUCOSE INHIBITED DIVISION PROTEIN A"/>
    <property type="match status" value="1"/>
</dbReference>
<dbReference type="PANTHER" id="PTHR11806:SF2">
    <property type="entry name" value="METHYLENETETRAHYDROFOLATE--TRNA-(URACIL-5-)-METHYLTRANSFERASE TRMFO"/>
    <property type="match status" value="1"/>
</dbReference>
<dbReference type="Pfam" id="PF01134">
    <property type="entry name" value="GIDA"/>
    <property type="match status" value="1"/>
</dbReference>
<dbReference type="SUPFAM" id="SSF51905">
    <property type="entry name" value="FAD/NAD(P)-binding domain"/>
    <property type="match status" value="1"/>
</dbReference>
<gene>
    <name evidence="1" type="primary">trmFO</name>
    <name type="ordered locus">Ppro_0527</name>
</gene>
<evidence type="ECO:0000255" key="1">
    <source>
        <dbReference type="HAMAP-Rule" id="MF_01037"/>
    </source>
</evidence>
<evidence type="ECO:0000256" key="2">
    <source>
        <dbReference type="SAM" id="MobiDB-lite"/>
    </source>
</evidence>